<feature type="chain" id="PRO_0000123726" description="Tritrans,polycis-undecaprenyl-diphosphate synthase (geranylgeranyl-diphosphate specific)">
    <location>
        <begin position="1"/>
        <end position="219"/>
    </location>
</feature>
<feature type="active site" evidence="1">
    <location>
        <position position="12"/>
    </location>
</feature>
<feature type="active site" description="Proton acceptor" evidence="1">
    <location>
        <position position="62"/>
    </location>
</feature>
<feature type="binding site" evidence="1">
    <location>
        <position position="12"/>
    </location>
    <ligand>
        <name>Mg(2+)</name>
        <dbReference type="ChEBI" id="CHEBI:18420"/>
    </ligand>
</feature>
<feature type="binding site" evidence="1">
    <location>
        <begin position="13"/>
        <end position="16"/>
    </location>
    <ligand>
        <name>substrate</name>
    </ligand>
</feature>
<feature type="binding site" evidence="1">
    <location>
        <position position="17"/>
    </location>
    <ligand>
        <name>substrate</name>
    </ligand>
</feature>
<feature type="binding site" evidence="1">
    <location>
        <begin position="59"/>
        <end position="61"/>
    </location>
    <ligand>
        <name>substrate</name>
    </ligand>
</feature>
<feature type="binding site" evidence="1">
    <location>
        <position position="66"/>
    </location>
    <ligand>
        <name>substrate</name>
    </ligand>
</feature>
<feature type="binding site" evidence="1">
    <location>
        <position position="168"/>
    </location>
    <ligand>
        <name>substrate</name>
    </ligand>
</feature>
<feature type="binding site" evidence="1">
    <location>
        <begin position="174"/>
        <end position="176"/>
    </location>
    <ligand>
        <name>substrate</name>
    </ligand>
</feature>
<feature type="binding site" evidence="1">
    <location>
        <position position="187"/>
    </location>
    <ligand>
        <name>Mg(2+)</name>
        <dbReference type="ChEBI" id="CHEBI:18420"/>
    </ligand>
</feature>
<accession>Q9YC66</accession>
<comment type="function">
    <text evidence="1">Catalyzes the sequential condensation of isopentenyl diphosphate (IPP) with geranylgeranyl diphosphate (GGPP) to yield (2Z,6Z,10Z,14Z,18Z,22Z,26Z,30E,34E,38E)-undecaprenyl diphosphate (tritrans,heptacis-UPP). It is probably the precursor of glycosyl carrier lipids.</text>
</comment>
<comment type="catalytic activity">
    <reaction evidence="1">
        <text>geranylgeranyl diphosphate + 7 isopentenyl diphosphate = tri-trans,hepta-cis-undecaprenyl diphosphate + 7 diphosphate</text>
        <dbReference type="Rhea" id="RHEA:27622"/>
        <dbReference type="ChEBI" id="CHEBI:33019"/>
        <dbReference type="ChEBI" id="CHEBI:57533"/>
        <dbReference type="ChEBI" id="CHEBI:60388"/>
        <dbReference type="ChEBI" id="CHEBI:128769"/>
        <dbReference type="EC" id="2.5.1.89"/>
    </reaction>
</comment>
<comment type="cofactor">
    <cofactor evidence="1">
        <name>Mg(2+)</name>
        <dbReference type="ChEBI" id="CHEBI:18420"/>
    </cofactor>
    <text evidence="1">Binds 2 magnesium ions per subunit.</text>
</comment>
<comment type="subunit">
    <text evidence="1">Homodimer.</text>
</comment>
<comment type="similarity">
    <text evidence="1">Belongs to the UPP synthase family.</text>
</comment>
<name>UPPS_AERPE</name>
<evidence type="ECO:0000255" key="1">
    <source>
        <dbReference type="HAMAP-Rule" id="MF_01139"/>
    </source>
</evidence>
<organism>
    <name type="scientific">Aeropyrum pernix (strain ATCC 700893 / DSM 11879 / JCM 9820 / NBRC 100138 / K1)</name>
    <dbReference type="NCBI Taxonomy" id="272557"/>
    <lineage>
        <taxon>Archaea</taxon>
        <taxon>Thermoproteota</taxon>
        <taxon>Thermoprotei</taxon>
        <taxon>Desulfurococcales</taxon>
        <taxon>Desulfurococcaceae</taxon>
        <taxon>Aeropyrum</taxon>
    </lineage>
</organism>
<proteinExistence type="inferred from homology"/>
<keyword id="KW-0460">Magnesium</keyword>
<keyword id="KW-0479">Metal-binding</keyword>
<keyword id="KW-1185">Reference proteome</keyword>
<keyword id="KW-0808">Transferase</keyword>
<protein>
    <recommendedName>
        <fullName evidence="1">Tritrans,polycis-undecaprenyl-diphosphate synthase (geranylgeranyl-diphosphate specific)</fullName>
        <ecNumber evidence="1">2.5.1.89</ecNumber>
    </recommendedName>
    <alternativeName>
        <fullName evidence="1">Undecaprenyl diphosphate synthase</fullName>
        <shortName evidence="1">UDS</shortName>
    </alternativeName>
    <alternativeName>
        <fullName evidence="1">Undecaprenyl pyrophosphate synthase</fullName>
        <shortName evidence="1">UPP synthase</shortName>
    </alternativeName>
</protein>
<sequence>MGQPRAIGIIPDGNRRWASLRGENLYIAYYTGYRNVKRILTYIRDFYPAIRSVYLYVLSRDNCSKRSRAELSILYRIMRRSIERDIAEIEKGGASLVIVGDINHPNLPDNIRESLAPYHFDMYLKKGSLPDGRRVVAGLCYDPFWEIEHYTPKTLPSRLLDEIDLVIRTGGEKRLSSFFPLLTRYAELYFIDKLWPDFTREDLDRAVQWFSTRRRPMGR</sequence>
<dbReference type="EC" id="2.5.1.89" evidence="1"/>
<dbReference type="EMBL" id="BA000002">
    <property type="protein sequence ID" value="BAA80382.1"/>
    <property type="molecule type" value="Genomic_DNA"/>
</dbReference>
<dbReference type="PIR" id="H72615">
    <property type="entry name" value="H72615"/>
</dbReference>
<dbReference type="RefSeq" id="WP_010866337.1">
    <property type="nucleotide sequence ID" value="NC_000854.2"/>
</dbReference>
<dbReference type="SMR" id="Q9YC66"/>
<dbReference type="STRING" id="272557.APE_1385"/>
<dbReference type="EnsemblBacteria" id="BAA80382">
    <property type="protein sequence ID" value="BAA80382"/>
    <property type="gene ID" value="APE_1385"/>
</dbReference>
<dbReference type="GeneID" id="1445983"/>
<dbReference type="KEGG" id="ape:APE_1385"/>
<dbReference type="eggNOG" id="arCOG01532">
    <property type="taxonomic scope" value="Archaea"/>
</dbReference>
<dbReference type="BRENDA" id="2.5.1.29">
    <property type="organism ID" value="171"/>
</dbReference>
<dbReference type="BRENDA" id="2.5.1.89">
    <property type="organism ID" value="171"/>
</dbReference>
<dbReference type="BRENDA" id="2.5.1.B35">
    <property type="organism ID" value="171"/>
</dbReference>
<dbReference type="Proteomes" id="UP000002518">
    <property type="component" value="Chromosome"/>
</dbReference>
<dbReference type="GO" id="GO:0045547">
    <property type="term" value="F:ditrans,polycis-polyprenyl diphosphate synthase [(2E,6E)-farnesyl diphosphate specific] activity"/>
    <property type="evidence" value="ECO:0007669"/>
    <property type="project" value="TreeGrafter"/>
</dbReference>
<dbReference type="GO" id="GO:0000287">
    <property type="term" value="F:magnesium ion binding"/>
    <property type="evidence" value="ECO:0007669"/>
    <property type="project" value="UniProtKB-UniRule"/>
</dbReference>
<dbReference type="GO" id="GO:0016094">
    <property type="term" value="P:polyprenol biosynthetic process"/>
    <property type="evidence" value="ECO:0007669"/>
    <property type="project" value="TreeGrafter"/>
</dbReference>
<dbReference type="Gene3D" id="3.40.1180.10">
    <property type="entry name" value="Decaprenyl diphosphate synthase-like"/>
    <property type="match status" value="2"/>
</dbReference>
<dbReference type="HAMAP" id="MF_01139">
    <property type="entry name" value="ISPT"/>
    <property type="match status" value="1"/>
</dbReference>
<dbReference type="InterPro" id="IPR001441">
    <property type="entry name" value="UPP_synth-like"/>
</dbReference>
<dbReference type="InterPro" id="IPR018520">
    <property type="entry name" value="UPP_synth-like_CS"/>
</dbReference>
<dbReference type="InterPro" id="IPR036424">
    <property type="entry name" value="UPP_synth-like_sf"/>
</dbReference>
<dbReference type="PANTHER" id="PTHR10291:SF43">
    <property type="entry name" value="DEHYDRODOLICHYL DIPHOSPHATE SYNTHASE COMPLEX SUBUNIT DHDDS"/>
    <property type="match status" value="1"/>
</dbReference>
<dbReference type="PANTHER" id="PTHR10291">
    <property type="entry name" value="DEHYDRODOLICHYL DIPHOSPHATE SYNTHASE FAMILY MEMBER"/>
    <property type="match status" value="1"/>
</dbReference>
<dbReference type="Pfam" id="PF01255">
    <property type="entry name" value="Prenyltransf"/>
    <property type="match status" value="2"/>
</dbReference>
<dbReference type="SUPFAM" id="SSF64005">
    <property type="entry name" value="Undecaprenyl diphosphate synthase"/>
    <property type="match status" value="1"/>
</dbReference>
<dbReference type="PROSITE" id="PS01066">
    <property type="entry name" value="UPP_SYNTHASE"/>
    <property type="match status" value="1"/>
</dbReference>
<reference key="1">
    <citation type="journal article" date="1999" name="DNA Res.">
        <title>Complete genome sequence of an aerobic hyper-thermophilic crenarchaeon, Aeropyrum pernix K1.</title>
        <authorList>
            <person name="Kawarabayasi Y."/>
            <person name="Hino Y."/>
            <person name="Horikawa H."/>
            <person name="Yamazaki S."/>
            <person name="Haikawa Y."/>
            <person name="Jin-no K."/>
            <person name="Takahashi M."/>
            <person name="Sekine M."/>
            <person name="Baba S."/>
            <person name="Ankai A."/>
            <person name="Kosugi H."/>
            <person name="Hosoyama A."/>
            <person name="Fukui S."/>
            <person name="Nagai Y."/>
            <person name="Nishijima K."/>
            <person name="Nakazawa H."/>
            <person name="Takamiya M."/>
            <person name="Masuda S."/>
            <person name="Funahashi T."/>
            <person name="Tanaka T."/>
            <person name="Kudoh Y."/>
            <person name="Yamazaki J."/>
            <person name="Kushida N."/>
            <person name="Oguchi A."/>
            <person name="Aoki K."/>
            <person name="Kubota K."/>
            <person name="Nakamura Y."/>
            <person name="Nomura N."/>
            <person name="Sako Y."/>
            <person name="Kikuchi H."/>
        </authorList>
    </citation>
    <scope>NUCLEOTIDE SEQUENCE [LARGE SCALE GENOMIC DNA]</scope>
    <source>
        <strain>ATCC 700893 / DSM 11879 / JCM 9820 / NBRC 100138 / K1</strain>
    </source>
</reference>
<gene>
    <name evidence="1" type="primary">uppS</name>
    <name type="ordered locus">APE_1385</name>
</gene>